<reference key="1">
    <citation type="journal article" date="2002" name="Nature">
        <title>Sequence and analysis of rice chromosome 4.</title>
        <authorList>
            <person name="Feng Q."/>
            <person name="Zhang Y."/>
            <person name="Hao P."/>
            <person name="Wang S."/>
            <person name="Fu G."/>
            <person name="Huang Y."/>
            <person name="Li Y."/>
            <person name="Zhu J."/>
            <person name="Liu Y."/>
            <person name="Hu X."/>
            <person name="Jia P."/>
            <person name="Zhang Y."/>
            <person name="Zhao Q."/>
            <person name="Ying K."/>
            <person name="Yu S."/>
            <person name="Tang Y."/>
            <person name="Weng Q."/>
            <person name="Zhang L."/>
            <person name="Lu Y."/>
            <person name="Mu J."/>
            <person name="Lu Y."/>
            <person name="Zhang L.S."/>
            <person name="Yu Z."/>
            <person name="Fan D."/>
            <person name="Liu X."/>
            <person name="Lu T."/>
            <person name="Li C."/>
            <person name="Wu Y."/>
            <person name="Sun T."/>
            <person name="Lei H."/>
            <person name="Li T."/>
            <person name="Hu H."/>
            <person name="Guan J."/>
            <person name="Wu M."/>
            <person name="Zhang R."/>
            <person name="Zhou B."/>
            <person name="Chen Z."/>
            <person name="Chen L."/>
            <person name="Jin Z."/>
            <person name="Wang R."/>
            <person name="Yin H."/>
            <person name="Cai Z."/>
            <person name="Ren S."/>
            <person name="Lv G."/>
            <person name="Gu W."/>
            <person name="Zhu G."/>
            <person name="Tu Y."/>
            <person name="Jia J."/>
            <person name="Zhang Y."/>
            <person name="Chen J."/>
            <person name="Kang H."/>
            <person name="Chen X."/>
            <person name="Shao C."/>
            <person name="Sun Y."/>
            <person name="Hu Q."/>
            <person name="Zhang X."/>
            <person name="Zhang W."/>
            <person name="Wang L."/>
            <person name="Ding C."/>
            <person name="Sheng H."/>
            <person name="Gu J."/>
            <person name="Chen S."/>
            <person name="Ni L."/>
            <person name="Zhu F."/>
            <person name="Chen W."/>
            <person name="Lan L."/>
            <person name="Lai Y."/>
            <person name="Cheng Z."/>
            <person name="Gu M."/>
            <person name="Jiang J."/>
            <person name="Li J."/>
            <person name="Hong G."/>
            <person name="Xue Y."/>
            <person name="Han B."/>
        </authorList>
    </citation>
    <scope>NUCLEOTIDE SEQUENCE [LARGE SCALE GENOMIC DNA]</scope>
    <source>
        <strain>cv. Nipponbare</strain>
    </source>
</reference>
<reference key="2">
    <citation type="journal article" date="2005" name="Nature">
        <title>The map-based sequence of the rice genome.</title>
        <authorList>
            <consortium name="International rice genome sequencing project (IRGSP)"/>
        </authorList>
    </citation>
    <scope>NUCLEOTIDE SEQUENCE [LARGE SCALE GENOMIC DNA]</scope>
    <source>
        <strain>cv. Nipponbare</strain>
    </source>
</reference>
<reference key="3">
    <citation type="journal article" date="2013" name="Rice">
        <title>Improvement of the Oryza sativa Nipponbare reference genome using next generation sequence and optical map data.</title>
        <authorList>
            <person name="Kawahara Y."/>
            <person name="de la Bastide M."/>
            <person name="Hamilton J.P."/>
            <person name="Kanamori H."/>
            <person name="McCombie W.R."/>
            <person name="Ouyang S."/>
            <person name="Schwartz D.C."/>
            <person name="Tanaka T."/>
            <person name="Wu J."/>
            <person name="Zhou S."/>
            <person name="Childs K.L."/>
            <person name="Davidson R.M."/>
            <person name="Lin H."/>
            <person name="Quesada-Ocampo L."/>
            <person name="Vaillancourt B."/>
            <person name="Sakai H."/>
            <person name="Lee S.S."/>
            <person name="Kim J."/>
            <person name="Numa H."/>
            <person name="Itoh T."/>
            <person name="Buell C.R."/>
            <person name="Matsumoto T."/>
        </authorList>
    </citation>
    <scope>GENOME REANNOTATION</scope>
    <source>
        <strain>cv. Nipponbare</strain>
    </source>
</reference>
<reference key="4">
    <citation type="journal article" date="2006" name="Photosyn. Res.">
        <title>Plant methionine sulfoxide reductase A and B multigenic families.</title>
        <authorList>
            <person name="Rouhier N."/>
            <person name="Vieira Dos Santos C."/>
            <person name="Tarrago L."/>
            <person name="Rey P."/>
        </authorList>
    </citation>
    <scope>GENE FAMILY</scope>
    <scope>NOMENCLATURE</scope>
</reference>
<proteinExistence type="evidence at transcript level"/>
<gene>
    <name type="primary">MSRA2-2</name>
    <name type="ordered locus">Os04g0482100</name>
    <name type="ordered locus">LOC_Os04g40620</name>
    <name type="ORF">OSJNBb0011N17.17</name>
</gene>
<comment type="function">
    <text evidence="1">Catalyzes the reduction of methionine sulfoxide (MetSO) to methionine in proteins. Plays a protective role against oxidative stress by restoring activity to proteins that have been inactivated by methionine oxidation. MSRA family specifically reduces the MetSO S-enantiomer (By similarity).</text>
</comment>
<comment type="catalytic activity">
    <reaction>
        <text>L-methionyl-[protein] + [thioredoxin]-disulfide + H2O = L-methionyl-(S)-S-oxide-[protein] + [thioredoxin]-dithiol</text>
        <dbReference type="Rhea" id="RHEA:14217"/>
        <dbReference type="Rhea" id="RHEA-COMP:10698"/>
        <dbReference type="Rhea" id="RHEA-COMP:10700"/>
        <dbReference type="Rhea" id="RHEA-COMP:12313"/>
        <dbReference type="Rhea" id="RHEA-COMP:12315"/>
        <dbReference type="ChEBI" id="CHEBI:15377"/>
        <dbReference type="ChEBI" id="CHEBI:16044"/>
        <dbReference type="ChEBI" id="CHEBI:29950"/>
        <dbReference type="ChEBI" id="CHEBI:44120"/>
        <dbReference type="ChEBI" id="CHEBI:50058"/>
        <dbReference type="EC" id="1.8.4.11"/>
    </reaction>
</comment>
<comment type="catalytic activity">
    <reaction>
        <text>[thioredoxin]-disulfide + L-methionine + H2O = L-methionine (S)-S-oxide + [thioredoxin]-dithiol</text>
        <dbReference type="Rhea" id="RHEA:19993"/>
        <dbReference type="Rhea" id="RHEA-COMP:10698"/>
        <dbReference type="Rhea" id="RHEA-COMP:10700"/>
        <dbReference type="ChEBI" id="CHEBI:15377"/>
        <dbReference type="ChEBI" id="CHEBI:29950"/>
        <dbReference type="ChEBI" id="CHEBI:50058"/>
        <dbReference type="ChEBI" id="CHEBI:57844"/>
        <dbReference type="ChEBI" id="CHEBI:58772"/>
        <dbReference type="EC" id="1.8.4.11"/>
    </reaction>
</comment>
<comment type="subcellular location">
    <subcellularLocation>
        <location evidence="3">Cytoplasm</location>
        <location evidence="3">Cytosol</location>
    </subcellularLocation>
</comment>
<comment type="similarity">
    <text evidence="3">Belongs to the MsrA Met sulfoxide reductase family.</text>
</comment>
<protein>
    <recommendedName>
        <fullName>Peptide methionine sulfoxide reductase A2-2</fullName>
        <shortName>OsMSRA2.2</shortName>
        <ecNumber>1.8.4.11</ecNumber>
    </recommendedName>
    <alternativeName>
        <fullName>Peptide-methionine (S)-S-oxide reductase</fullName>
        <shortName>Peptide Met(O) reductase</shortName>
    </alternativeName>
    <alternativeName>
        <fullName>Protein-methionine-S-oxide reductase</fullName>
    </alternativeName>
</protein>
<keyword id="KW-0963">Cytoplasm</keyword>
<keyword id="KW-0560">Oxidoreductase</keyword>
<keyword id="KW-1185">Reference proteome</keyword>
<evidence type="ECO:0000250" key="1"/>
<evidence type="ECO:0000256" key="2">
    <source>
        <dbReference type="SAM" id="MobiDB-lite"/>
    </source>
</evidence>
<evidence type="ECO:0000305" key="3"/>
<sequence>MSNDTGADGGAANPDLGPDADAAAGEGLELAQFAAGCFWSVELTYQRLPGVARTEVGFSQGHHHEPTYDDVCGQGTGHAEVVRVHYDPKACPYGVLLDVFWAKHRPTTLIRQGDEAGTQYRSGIYYYTAEQERVARESLEAKQEEWKEKIVTEILPARRFYPAEEYHQRYLEKGGQSAQKGCTDPIRRYG</sequence>
<name>MSR22_ORYSJ</name>
<accession>Q7XUP6</accession>
<accession>A0A0P0WC05</accession>
<organism>
    <name type="scientific">Oryza sativa subsp. japonica</name>
    <name type="common">Rice</name>
    <dbReference type="NCBI Taxonomy" id="39947"/>
    <lineage>
        <taxon>Eukaryota</taxon>
        <taxon>Viridiplantae</taxon>
        <taxon>Streptophyta</taxon>
        <taxon>Embryophyta</taxon>
        <taxon>Tracheophyta</taxon>
        <taxon>Spermatophyta</taxon>
        <taxon>Magnoliopsida</taxon>
        <taxon>Liliopsida</taxon>
        <taxon>Poales</taxon>
        <taxon>Poaceae</taxon>
        <taxon>BOP clade</taxon>
        <taxon>Oryzoideae</taxon>
        <taxon>Oryzeae</taxon>
        <taxon>Oryzinae</taxon>
        <taxon>Oryza</taxon>
        <taxon>Oryza sativa</taxon>
    </lineage>
</organism>
<dbReference type="EC" id="1.8.4.11"/>
<dbReference type="EMBL" id="AL606614">
    <property type="protein sequence ID" value="CAD41100.2"/>
    <property type="molecule type" value="Genomic_DNA"/>
</dbReference>
<dbReference type="EMBL" id="AP014960">
    <property type="protein sequence ID" value="BAS89755.1"/>
    <property type="molecule type" value="Genomic_DNA"/>
</dbReference>
<dbReference type="RefSeq" id="XP_015635092.1">
    <property type="nucleotide sequence ID" value="XM_015779606.1"/>
</dbReference>
<dbReference type="SMR" id="Q7XUP6"/>
<dbReference type="FunCoup" id="Q7XUP6">
    <property type="interactions" value="1537"/>
</dbReference>
<dbReference type="STRING" id="39947.Q7XUP6"/>
<dbReference type="PaxDb" id="39947-Q7XUP6"/>
<dbReference type="EnsemblPlants" id="Os04t0482100-00">
    <property type="protein sequence ID" value="Os04t0482100-00"/>
    <property type="gene ID" value="Os04g0482100"/>
</dbReference>
<dbReference type="Gramene" id="Os04t0482100-00">
    <property type="protein sequence ID" value="Os04t0482100-00"/>
    <property type="gene ID" value="Os04g0482100"/>
</dbReference>
<dbReference type="eggNOG" id="KOG1635">
    <property type="taxonomic scope" value="Eukaryota"/>
</dbReference>
<dbReference type="HOGENOM" id="CLU_031040_10_2_1"/>
<dbReference type="InParanoid" id="Q7XUP6"/>
<dbReference type="OMA" id="LFWESHD"/>
<dbReference type="OrthoDB" id="77405at2759"/>
<dbReference type="Proteomes" id="UP000000763">
    <property type="component" value="Chromosome 4"/>
</dbReference>
<dbReference type="Proteomes" id="UP000059680">
    <property type="component" value="Chromosome 4"/>
</dbReference>
<dbReference type="GO" id="GO:0005737">
    <property type="term" value="C:cytoplasm"/>
    <property type="evidence" value="ECO:0000318"/>
    <property type="project" value="GO_Central"/>
</dbReference>
<dbReference type="GO" id="GO:0005829">
    <property type="term" value="C:cytosol"/>
    <property type="evidence" value="ECO:0007669"/>
    <property type="project" value="UniProtKB-SubCell"/>
</dbReference>
<dbReference type="GO" id="GO:0036456">
    <property type="term" value="F:L-methionine-(S)-S-oxide reductase activity"/>
    <property type="evidence" value="ECO:0000318"/>
    <property type="project" value="GO_Central"/>
</dbReference>
<dbReference type="GO" id="GO:0008113">
    <property type="term" value="F:peptide-methionine (S)-S-oxide reductase activity"/>
    <property type="evidence" value="ECO:0000318"/>
    <property type="project" value="GO_Central"/>
</dbReference>
<dbReference type="GO" id="GO:0034599">
    <property type="term" value="P:cellular response to oxidative stress"/>
    <property type="evidence" value="ECO:0000318"/>
    <property type="project" value="GO_Central"/>
</dbReference>
<dbReference type="FunFam" id="3.30.1060.10:FF:000002">
    <property type="entry name" value="Peptide methionine sulfoxide reductase"/>
    <property type="match status" value="1"/>
</dbReference>
<dbReference type="Gene3D" id="3.30.1060.10">
    <property type="entry name" value="Peptide methionine sulphoxide reductase MsrA"/>
    <property type="match status" value="1"/>
</dbReference>
<dbReference type="HAMAP" id="MF_01401">
    <property type="entry name" value="MsrA"/>
    <property type="match status" value="1"/>
</dbReference>
<dbReference type="InterPro" id="IPR002569">
    <property type="entry name" value="Met_Sox_Rdtase_MsrA_dom"/>
</dbReference>
<dbReference type="InterPro" id="IPR036509">
    <property type="entry name" value="Met_Sox_Rdtase_MsrA_sf"/>
</dbReference>
<dbReference type="InterPro" id="IPR050162">
    <property type="entry name" value="MsrA_MetSO_reductase"/>
</dbReference>
<dbReference type="NCBIfam" id="TIGR00401">
    <property type="entry name" value="msrA"/>
    <property type="match status" value="1"/>
</dbReference>
<dbReference type="PANTHER" id="PTHR42799">
    <property type="entry name" value="MITOCHONDRIAL PEPTIDE METHIONINE SULFOXIDE REDUCTASE"/>
    <property type="match status" value="1"/>
</dbReference>
<dbReference type="PANTHER" id="PTHR42799:SF8">
    <property type="entry name" value="PEPTIDE METHIONINE SULFOXIDE REDUCTASE A2-2"/>
    <property type="match status" value="1"/>
</dbReference>
<dbReference type="Pfam" id="PF01625">
    <property type="entry name" value="PMSR"/>
    <property type="match status" value="1"/>
</dbReference>
<dbReference type="SUPFAM" id="SSF55068">
    <property type="entry name" value="Peptide methionine sulfoxide reductase"/>
    <property type="match status" value="1"/>
</dbReference>
<feature type="chain" id="PRO_0000395516" description="Peptide methionine sulfoxide reductase A2-2">
    <location>
        <begin position="1"/>
        <end position="190"/>
    </location>
</feature>
<feature type="region of interest" description="Disordered" evidence="2">
    <location>
        <begin position="1"/>
        <end position="20"/>
    </location>
</feature>
<feature type="compositionally biased region" description="Low complexity" evidence="2">
    <location>
        <begin position="10"/>
        <end position="20"/>
    </location>
</feature>